<protein>
    <recommendedName>
        <fullName evidence="1">Glutamate--tRNA ligase</fullName>
        <ecNumber evidence="1">6.1.1.17</ecNumber>
    </recommendedName>
    <alternativeName>
        <fullName evidence="1">Glutamyl-tRNA synthetase</fullName>
        <shortName evidence="1">GluRS</shortName>
    </alternativeName>
</protein>
<name>SYE_PROMS</name>
<keyword id="KW-0030">Aminoacyl-tRNA synthetase</keyword>
<keyword id="KW-0067">ATP-binding</keyword>
<keyword id="KW-0963">Cytoplasm</keyword>
<keyword id="KW-0436">Ligase</keyword>
<keyword id="KW-0547">Nucleotide-binding</keyword>
<keyword id="KW-0648">Protein biosynthesis</keyword>
<gene>
    <name evidence="1" type="primary">gltX</name>
    <name type="ordered locus">A9601_05281</name>
</gene>
<evidence type="ECO:0000255" key="1">
    <source>
        <dbReference type="HAMAP-Rule" id="MF_00022"/>
    </source>
</evidence>
<comment type="function">
    <text evidence="1">Catalyzes the attachment of glutamate to tRNA(Glu) in a two-step reaction: glutamate is first activated by ATP to form Glu-AMP and then transferred to the acceptor end of tRNA(Glu).</text>
</comment>
<comment type="catalytic activity">
    <reaction evidence="1">
        <text>tRNA(Glu) + L-glutamate + ATP = L-glutamyl-tRNA(Glu) + AMP + diphosphate</text>
        <dbReference type="Rhea" id="RHEA:23540"/>
        <dbReference type="Rhea" id="RHEA-COMP:9663"/>
        <dbReference type="Rhea" id="RHEA-COMP:9680"/>
        <dbReference type="ChEBI" id="CHEBI:29985"/>
        <dbReference type="ChEBI" id="CHEBI:30616"/>
        <dbReference type="ChEBI" id="CHEBI:33019"/>
        <dbReference type="ChEBI" id="CHEBI:78442"/>
        <dbReference type="ChEBI" id="CHEBI:78520"/>
        <dbReference type="ChEBI" id="CHEBI:456215"/>
        <dbReference type="EC" id="6.1.1.17"/>
    </reaction>
</comment>
<comment type="subunit">
    <text evidence="1">Monomer.</text>
</comment>
<comment type="subcellular location">
    <subcellularLocation>
        <location evidence="1">Cytoplasm</location>
    </subcellularLocation>
</comment>
<comment type="similarity">
    <text evidence="1">Belongs to the class-I aminoacyl-tRNA synthetase family. Glutamate--tRNA ligase type 1 subfamily.</text>
</comment>
<proteinExistence type="inferred from homology"/>
<accession>A2BPV5</accession>
<dbReference type="EC" id="6.1.1.17" evidence="1"/>
<dbReference type="EMBL" id="CP000551">
    <property type="protein sequence ID" value="ABM69816.1"/>
    <property type="molecule type" value="Genomic_DNA"/>
</dbReference>
<dbReference type="RefSeq" id="WP_011817983.1">
    <property type="nucleotide sequence ID" value="NC_008816.1"/>
</dbReference>
<dbReference type="SMR" id="A2BPV5"/>
<dbReference type="STRING" id="146891.A9601_05281"/>
<dbReference type="KEGG" id="pmb:A9601_05281"/>
<dbReference type="eggNOG" id="COG0008">
    <property type="taxonomic scope" value="Bacteria"/>
</dbReference>
<dbReference type="HOGENOM" id="CLU_015768_6_0_3"/>
<dbReference type="OrthoDB" id="9807503at2"/>
<dbReference type="Proteomes" id="UP000002590">
    <property type="component" value="Chromosome"/>
</dbReference>
<dbReference type="GO" id="GO:0005829">
    <property type="term" value="C:cytosol"/>
    <property type="evidence" value="ECO:0007669"/>
    <property type="project" value="TreeGrafter"/>
</dbReference>
<dbReference type="GO" id="GO:0005524">
    <property type="term" value="F:ATP binding"/>
    <property type="evidence" value="ECO:0007669"/>
    <property type="project" value="UniProtKB-UniRule"/>
</dbReference>
<dbReference type="GO" id="GO:0004818">
    <property type="term" value="F:glutamate-tRNA ligase activity"/>
    <property type="evidence" value="ECO:0007669"/>
    <property type="project" value="UniProtKB-UniRule"/>
</dbReference>
<dbReference type="GO" id="GO:0000049">
    <property type="term" value="F:tRNA binding"/>
    <property type="evidence" value="ECO:0007669"/>
    <property type="project" value="InterPro"/>
</dbReference>
<dbReference type="GO" id="GO:0008270">
    <property type="term" value="F:zinc ion binding"/>
    <property type="evidence" value="ECO:0007669"/>
    <property type="project" value="InterPro"/>
</dbReference>
<dbReference type="GO" id="GO:0006424">
    <property type="term" value="P:glutamyl-tRNA aminoacylation"/>
    <property type="evidence" value="ECO:0007669"/>
    <property type="project" value="UniProtKB-UniRule"/>
</dbReference>
<dbReference type="CDD" id="cd00808">
    <property type="entry name" value="GluRS_core"/>
    <property type="match status" value="1"/>
</dbReference>
<dbReference type="FunFam" id="3.40.50.620:FF:000007">
    <property type="entry name" value="Glutamate--tRNA ligase"/>
    <property type="match status" value="1"/>
</dbReference>
<dbReference type="Gene3D" id="1.10.10.350">
    <property type="match status" value="1"/>
</dbReference>
<dbReference type="Gene3D" id="1.10.8.70">
    <property type="entry name" value="Glutamate-tRNA synthetase, class I, anticodon-binding domain 1"/>
    <property type="match status" value="1"/>
</dbReference>
<dbReference type="Gene3D" id="1.10.1160.10">
    <property type="entry name" value="Glutamyl-trna Synthetase, Domain 2"/>
    <property type="match status" value="1"/>
</dbReference>
<dbReference type="Gene3D" id="3.90.800.10">
    <property type="entry name" value="Glutamyl-tRNA Synthetase, Domain 3"/>
    <property type="match status" value="1"/>
</dbReference>
<dbReference type="Gene3D" id="3.40.50.620">
    <property type="entry name" value="HUPs"/>
    <property type="match status" value="1"/>
</dbReference>
<dbReference type="HAMAP" id="MF_00022">
    <property type="entry name" value="Glu_tRNA_synth_type1"/>
    <property type="match status" value="1"/>
</dbReference>
<dbReference type="InterPro" id="IPR045462">
    <property type="entry name" value="aa-tRNA-synth_I_cd-bd"/>
</dbReference>
<dbReference type="InterPro" id="IPR020751">
    <property type="entry name" value="aa-tRNA-synth_I_codon-bd_sub2"/>
</dbReference>
<dbReference type="InterPro" id="IPR001412">
    <property type="entry name" value="aa-tRNA-synth_I_CS"/>
</dbReference>
<dbReference type="InterPro" id="IPR008925">
    <property type="entry name" value="aa_tRNA-synth_I_cd-bd_sf"/>
</dbReference>
<dbReference type="InterPro" id="IPR004527">
    <property type="entry name" value="Glu-tRNA-ligase_bac/mito"/>
</dbReference>
<dbReference type="InterPro" id="IPR020752">
    <property type="entry name" value="Glu-tRNA-synth_I_codon-bd_sub1"/>
</dbReference>
<dbReference type="InterPro" id="IPR000924">
    <property type="entry name" value="Glu/Gln-tRNA-synth"/>
</dbReference>
<dbReference type="InterPro" id="IPR020058">
    <property type="entry name" value="Glu/Gln-tRNA-synth_Ib_cat-dom"/>
</dbReference>
<dbReference type="InterPro" id="IPR020061">
    <property type="entry name" value="Glu_tRNA_lig_a-bdl"/>
</dbReference>
<dbReference type="InterPro" id="IPR049940">
    <property type="entry name" value="GluQ/Sye"/>
</dbReference>
<dbReference type="InterPro" id="IPR033910">
    <property type="entry name" value="GluRS_core"/>
</dbReference>
<dbReference type="InterPro" id="IPR014729">
    <property type="entry name" value="Rossmann-like_a/b/a_fold"/>
</dbReference>
<dbReference type="NCBIfam" id="TIGR00464">
    <property type="entry name" value="gltX_bact"/>
    <property type="match status" value="1"/>
</dbReference>
<dbReference type="PANTHER" id="PTHR43311">
    <property type="entry name" value="GLUTAMATE--TRNA LIGASE"/>
    <property type="match status" value="1"/>
</dbReference>
<dbReference type="PANTHER" id="PTHR43311:SF2">
    <property type="entry name" value="GLUTAMATE--TRNA LIGASE, MITOCHONDRIAL-RELATED"/>
    <property type="match status" value="1"/>
</dbReference>
<dbReference type="Pfam" id="PF19269">
    <property type="entry name" value="Anticodon_2"/>
    <property type="match status" value="1"/>
</dbReference>
<dbReference type="Pfam" id="PF00749">
    <property type="entry name" value="tRNA-synt_1c"/>
    <property type="match status" value="1"/>
</dbReference>
<dbReference type="PRINTS" id="PR00987">
    <property type="entry name" value="TRNASYNTHGLU"/>
</dbReference>
<dbReference type="SUPFAM" id="SSF48163">
    <property type="entry name" value="An anticodon-binding domain of class I aminoacyl-tRNA synthetases"/>
    <property type="match status" value="1"/>
</dbReference>
<dbReference type="SUPFAM" id="SSF52374">
    <property type="entry name" value="Nucleotidylyl transferase"/>
    <property type="match status" value="1"/>
</dbReference>
<dbReference type="PROSITE" id="PS00178">
    <property type="entry name" value="AA_TRNA_LIGASE_I"/>
    <property type="match status" value="1"/>
</dbReference>
<organism>
    <name type="scientific">Prochlorococcus marinus (strain AS9601)</name>
    <dbReference type="NCBI Taxonomy" id="146891"/>
    <lineage>
        <taxon>Bacteria</taxon>
        <taxon>Bacillati</taxon>
        <taxon>Cyanobacteriota</taxon>
        <taxon>Cyanophyceae</taxon>
        <taxon>Synechococcales</taxon>
        <taxon>Prochlorococcaceae</taxon>
        <taxon>Prochlorococcus</taxon>
    </lineage>
</organism>
<sequence length="476" mass="55285">MEKRLRLAPSPTGLFHIGTARTALFNWLYAQKIGGKFLIRIEDTDFLRSKSEYTKNILQGLKWLGLKWDEEPIKQSDRISIHKSHIKKLLECGAAYRCFTSEDEISELREEQKKKGLPPKHDNRHRSLSKEEIETFISQGRTSVIRFKIDEKIVIKWIDQIRGEIKWQGKDLGGDLVLSRRAKGYEIGDPLYNLAVVVDDNFMNITHVVRGEDHISNTAKQILIYNALNFNLPTFSHTPLILNSEGKKLSKRDCVTSIDEFREMGYLPEALSNYMAFLGWSPKTADREILSLEEISEIFDLSEINKAGAKFSWEKLNWINSQYIKNMESIKLVEIMRTYWDENGWEPPSQEWANKLAILIRDSMTLLKDSIDQSKPFFLIPTIQKEGQDFLENRESKLSLKLILNYLIEKNTIKLNKEKAKEIINEISKKHNIKKGILMKSLRVAFFGSLIGPDLIQSWELFAESKTDRTRIERCL</sequence>
<reference key="1">
    <citation type="journal article" date="2007" name="PLoS Genet.">
        <title>Patterns and implications of gene gain and loss in the evolution of Prochlorococcus.</title>
        <authorList>
            <person name="Kettler G.C."/>
            <person name="Martiny A.C."/>
            <person name="Huang K."/>
            <person name="Zucker J."/>
            <person name="Coleman M.L."/>
            <person name="Rodrigue S."/>
            <person name="Chen F."/>
            <person name="Lapidus A."/>
            <person name="Ferriera S."/>
            <person name="Johnson J."/>
            <person name="Steglich C."/>
            <person name="Church G.M."/>
            <person name="Richardson P."/>
            <person name="Chisholm S.W."/>
        </authorList>
    </citation>
    <scope>NUCLEOTIDE SEQUENCE [LARGE SCALE GENOMIC DNA]</scope>
    <source>
        <strain>AS9601</strain>
    </source>
</reference>
<feature type="chain" id="PRO_1000001935" description="Glutamate--tRNA ligase">
    <location>
        <begin position="1"/>
        <end position="476"/>
    </location>
</feature>
<feature type="short sequence motif" description="'HIGH' region" evidence="1">
    <location>
        <begin position="9"/>
        <end position="19"/>
    </location>
</feature>
<feature type="short sequence motif" description="'KMSKS' region" evidence="1">
    <location>
        <begin position="248"/>
        <end position="252"/>
    </location>
</feature>
<feature type="binding site" evidence="1">
    <location>
        <position position="251"/>
    </location>
    <ligand>
        <name>ATP</name>
        <dbReference type="ChEBI" id="CHEBI:30616"/>
    </ligand>
</feature>